<reference key="1">
    <citation type="submission" date="2006-03" db="EMBL/GenBank/DDBJ databases">
        <title>Complete sequence of Rhodopseudomonas palustris BisB5.</title>
        <authorList>
            <consortium name="US DOE Joint Genome Institute"/>
            <person name="Copeland A."/>
            <person name="Lucas S."/>
            <person name="Lapidus A."/>
            <person name="Barry K."/>
            <person name="Detter J.C."/>
            <person name="Glavina del Rio T."/>
            <person name="Hammon N."/>
            <person name="Israni S."/>
            <person name="Dalin E."/>
            <person name="Tice H."/>
            <person name="Pitluck S."/>
            <person name="Chain P."/>
            <person name="Malfatti S."/>
            <person name="Shin M."/>
            <person name="Vergez L."/>
            <person name="Schmutz J."/>
            <person name="Larimer F."/>
            <person name="Land M."/>
            <person name="Hauser L."/>
            <person name="Pelletier D.A."/>
            <person name="Kyrpides N."/>
            <person name="Lykidis A."/>
            <person name="Oda Y."/>
            <person name="Harwood C.S."/>
            <person name="Richardson P."/>
        </authorList>
    </citation>
    <scope>NUCLEOTIDE SEQUENCE [LARGE SCALE GENOMIC DNA]</scope>
    <source>
        <strain>BisB5</strain>
    </source>
</reference>
<proteinExistence type="inferred from homology"/>
<organism>
    <name type="scientific">Rhodopseudomonas palustris (strain BisB5)</name>
    <dbReference type="NCBI Taxonomy" id="316057"/>
    <lineage>
        <taxon>Bacteria</taxon>
        <taxon>Pseudomonadati</taxon>
        <taxon>Pseudomonadota</taxon>
        <taxon>Alphaproteobacteria</taxon>
        <taxon>Hyphomicrobiales</taxon>
        <taxon>Nitrobacteraceae</taxon>
        <taxon>Rhodopseudomonas</taxon>
    </lineage>
</organism>
<sequence>MAEAPMAQAPTAQAPTAEAAAEAPGLRNFTINFGPQHPAAHGVLRLVLELDGEVVERVDPHIGLLHRGTEKLIEHKTYLQAIPYFDRLDYVAPMNQEHAFCLAVEKLLGIAVPRRAQLIRVLYCEIGRILSHLLNVTTQAMDVGALTPPLWGFEEREKLMMFYERASGSRMHAAYFRVGGVHQDLPPQLVADIDSWCDSFIQVVDDLETLLTDNRIFKQRNVDIGVVTLEQAWEWGFSGVMVRGSGAAWDLRKSQPYECYAEMDFDIPIGKNGDCYDRYCLRVEEMRQSIRIMKQCIAKLRAPDGQGRVAIDDNKIFPPRRGEMKRSMESLIHHFKLYTEGFRVPEGEVYVAVEAPKGEFGVYLVSDGSNKPYKCKIRAPGFAHLQAMDFICRGHLLADVSAILGSLDIVFGEVDR</sequence>
<comment type="function">
    <text evidence="1">NDH-1 shuttles electrons from NADH, via FMN and iron-sulfur (Fe-S) centers, to quinones in the respiratory chain. The immediate electron acceptor for the enzyme in this species is believed to be ubiquinone. Couples the redox reaction to proton translocation (for every two electrons transferred, four hydrogen ions are translocated across the cytoplasmic membrane), and thus conserves the redox energy in a proton gradient.</text>
</comment>
<comment type="catalytic activity">
    <reaction evidence="1">
        <text>a quinone + NADH + 5 H(+)(in) = a quinol + NAD(+) + 4 H(+)(out)</text>
        <dbReference type="Rhea" id="RHEA:57888"/>
        <dbReference type="ChEBI" id="CHEBI:15378"/>
        <dbReference type="ChEBI" id="CHEBI:24646"/>
        <dbReference type="ChEBI" id="CHEBI:57540"/>
        <dbReference type="ChEBI" id="CHEBI:57945"/>
        <dbReference type="ChEBI" id="CHEBI:132124"/>
    </reaction>
</comment>
<comment type="subunit">
    <text evidence="1">NDH-1 is composed of 14 different subunits. Subunits NuoB, C, D, E, F, and G constitute the peripheral sector of the complex.</text>
</comment>
<comment type="subcellular location">
    <subcellularLocation>
        <location evidence="1">Cell inner membrane</location>
        <topology evidence="1">Peripheral membrane protein</topology>
        <orientation evidence="1">Cytoplasmic side</orientation>
    </subcellularLocation>
</comment>
<comment type="similarity">
    <text evidence="1">Belongs to the complex I 49 kDa subunit family.</text>
</comment>
<gene>
    <name evidence="1" type="primary">nuoD</name>
    <name type="ordered locus">RPD_2884</name>
</gene>
<accession>Q135X7</accession>
<feature type="chain" id="PRO_0000357906" description="NADH-quinone oxidoreductase subunit D">
    <location>
        <begin position="1"/>
        <end position="416"/>
    </location>
</feature>
<protein>
    <recommendedName>
        <fullName evidence="1">NADH-quinone oxidoreductase subunit D</fullName>
        <ecNumber evidence="1">7.1.1.-</ecNumber>
    </recommendedName>
    <alternativeName>
        <fullName evidence="1">NADH dehydrogenase I subunit D</fullName>
    </alternativeName>
    <alternativeName>
        <fullName evidence="1">NDH-1 subunit D</fullName>
    </alternativeName>
</protein>
<name>NUOD_RHOPS</name>
<evidence type="ECO:0000255" key="1">
    <source>
        <dbReference type="HAMAP-Rule" id="MF_01358"/>
    </source>
</evidence>
<keyword id="KW-0997">Cell inner membrane</keyword>
<keyword id="KW-1003">Cell membrane</keyword>
<keyword id="KW-0472">Membrane</keyword>
<keyword id="KW-0520">NAD</keyword>
<keyword id="KW-0874">Quinone</keyword>
<keyword id="KW-1278">Translocase</keyword>
<keyword id="KW-0813">Transport</keyword>
<keyword id="KW-0830">Ubiquinone</keyword>
<dbReference type="EC" id="7.1.1.-" evidence="1"/>
<dbReference type="EMBL" id="CP000283">
    <property type="protein sequence ID" value="ABE40112.1"/>
    <property type="molecule type" value="Genomic_DNA"/>
</dbReference>
<dbReference type="SMR" id="Q135X7"/>
<dbReference type="STRING" id="316057.RPD_2884"/>
<dbReference type="KEGG" id="rpd:RPD_2884"/>
<dbReference type="eggNOG" id="COG0649">
    <property type="taxonomic scope" value="Bacteria"/>
</dbReference>
<dbReference type="HOGENOM" id="CLU_015134_1_1_5"/>
<dbReference type="Proteomes" id="UP000001818">
    <property type="component" value="Chromosome"/>
</dbReference>
<dbReference type="GO" id="GO:0005886">
    <property type="term" value="C:plasma membrane"/>
    <property type="evidence" value="ECO:0007669"/>
    <property type="project" value="UniProtKB-SubCell"/>
</dbReference>
<dbReference type="GO" id="GO:0051287">
    <property type="term" value="F:NAD binding"/>
    <property type="evidence" value="ECO:0007669"/>
    <property type="project" value="InterPro"/>
</dbReference>
<dbReference type="GO" id="GO:0050136">
    <property type="term" value="F:NADH:ubiquinone reductase (non-electrogenic) activity"/>
    <property type="evidence" value="ECO:0007669"/>
    <property type="project" value="UniProtKB-UniRule"/>
</dbReference>
<dbReference type="GO" id="GO:0048038">
    <property type="term" value="F:quinone binding"/>
    <property type="evidence" value="ECO:0007669"/>
    <property type="project" value="UniProtKB-KW"/>
</dbReference>
<dbReference type="FunFam" id="1.10.645.10:FF:000005">
    <property type="entry name" value="NADH-quinone oxidoreductase subunit D"/>
    <property type="match status" value="1"/>
</dbReference>
<dbReference type="Gene3D" id="1.10.645.10">
    <property type="entry name" value="Cytochrome-c3 Hydrogenase, chain B"/>
    <property type="match status" value="1"/>
</dbReference>
<dbReference type="HAMAP" id="MF_01358">
    <property type="entry name" value="NDH1_NuoD"/>
    <property type="match status" value="1"/>
</dbReference>
<dbReference type="InterPro" id="IPR001135">
    <property type="entry name" value="NADH_Q_OxRdtase_suD"/>
</dbReference>
<dbReference type="InterPro" id="IPR014029">
    <property type="entry name" value="NADH_UbQ_OxRdtase_49kDa_CS"/>
</dbReference>
<dbReference type="InterPro" id="IPR022885">
    <property type="entry name" value="NDH1_su_D/H"/>
</dbReference>
<dbReference type="InterPro" id="IPR029014">
    <property type="entry name" value="NiFe-Hase_large"/>
</dbReference>
<dbReference type="NCBIfam" id="TIGR01962">
    <property type="entry name" value="NuoD"/>
    <property type="match status" value="1"/>
</dbReference>
<dbReference type="NCBIfam" id="NF004739">
    <property type="entry name" value="PRK06075.1"/>
    <property type="match status" value="1"/>
</dbReference>
<dbReference type="PANTHER" id="PTHR11993:SF10">
    <property type="entry name" value="NADH DEHYDROGENASE [UBIQUINONE] IRON-SULFUR PROTEIN 2, MITOCHONDRIAL"/>
    <property type="match status" value="1"/>
</dbReference>
<dbReference type="PANTHER" id="PTHR11993">
    <property type="entry name" value="NADH-UBIQUINONE OXIDOREDUCTASE 49 KDA SUBUNIT"/>
    <property type="match status" value="1"/>
</dbReference>
<dbReference type="Pfam" id="PF00346">
    <property type="entry name" value="Complex1_49kDa"/>
    <property type="match status" value="1"/>
</dbReference>
<dbReference type="SUPFAM" id="SSF56762">
    <property type="entry name" value="HydB/Nqo4-like"/>
    <property type="match status" value="1"/>
</dbReference>
<dbReference type="PROSITE" id="PS00535">
    <property type="entry name" value="COMPLEX1_49K"/>
    <property type="match status" value="1"/>
</dbReference>